<gene>
    <name evidence="1" type="primary">rnhC</name>
    <name type="ordered locus">SAK_1730</name>
</gene>
<name>RNH3_STRA1</name>
<organism>
    <name type="scientific">Streptococcus agalactiae serotype Ia (strain ATCC 27591 / A909 / CDC SS700)</name>
    <dbReference type="NCBI Taxonomy" id="205921"/>
    <lineage>
        <taxon>Bacteria</taxon>
        <taxon>Bacillati</taxon>
        <taxon>Bacillota</taxon>
        <taxon>Bacilli</taxon>
        <taxon>Lactobacillales</taxon>
        <taxon>Streptococcaceae</taxon>
        <taxon>Streptococcus</taxon>
    </lineage>
</organism>
<proteinExistence type="inferred from homology"/>
<accession>Q3JZH3</accession>
<sequence length="297" mass="32656">MNTIVMQADKKLQEKIRTDLAQHHISNNNPYVVFSAKISGATVLLYTSGKLVFQGSNASHIAQKYGFIEQKESCSSESQDIPIIGTDEVGNGSYFGGLAVVASFVTPKDHAYLKKLGVGDSKTLTDQKIKQIAPLLEKAIPHKALLLSPQKYNQVVSPNNKHNAVSVKVALHNQAIFLLLQDGFEPEKIVIDAFTSSKNYQNYLKNEKNQFKQTITLEEKAENKYLAVAVSSIIARNLFLENLNKLSDDVGYKLPSGAGHQSDKVASQLLKAYGISSLEHCAKLHFANTKKAQALLK</sequence>
<protein>
    <recommendedName>
        <fullName evidence="1">Ribonuclease HIII</fullName>
        <shortName evidence="1">RNase HIII</shortName>
        <ecNumber evidence="1">3.1.26.4</ecNumber>
    </recommendedName>
</protein>
<keyword id="KW-0963">Cytoplasm</keyword>
<keyword id="KW-0255">Endonuclease</keyword>
<keyword id="KW-0378">Hydrolase</keyword>
<keyword id="KW-0460">Magnesium</keyword>
<keyword id="KW-0479">Metal-binding</keyword>
<keyword id="KW-0540">Nuclease</keyword>
<evidence type="ECO:0000255" key="1">
    <source>
        <dbReference type="HAMAP-Rule" id="MF_00053"/>
    </source>
</evidence>
<evidence type="ECO:0000255" key="2">
    <source>
        <dbReference type="PROSITE-ProRule" id="PRU01319"/>
    </source>
</evidence>
<feature type="chain" id="PRO_1000031240" description="Ribonuclease HIII">
    <location>
        <begin position="1"/>
        <end position="297"/>
    </location>
</feature>
<feature type="domain" description="RNase H type-2" evidence="2">
    <location>
        <begin position="81"/>
        <end position="297"/>
    </location>
</feature>
<feature type="binding site" evidence="1">
    <location>
        <position position="87"/>
    </location>
    <ligand>
        <name>a divalent metal cation</name>
        <dbReference type="ChEBI" id="CHEBI:60240"/>
    </ligand>
</feature>
<feature type="binding site" evidence="1">
    <location>
        <position position="88"/>
    </location>
    <ligand>
        <name>a divalent metal cation</name>
        <dbReference type="ChEBI" id="CHEBI:60240"/>
    </ligand>
</feature>
<feature type="binding site" evidence="1">
    <location>
        <position position="192"/>
    </location>
    <ligand>
        <name>a divalent metal cation</name>
        <dbReference type="ChEBI" id="CHEBI:60240"/>
    </ligand>
</feature>
<reference key="1">
    <citation type="journal article" date="2005" name="Proc. Natl. Acad. Sci. U.S.A.">
        <title>Genome analysis of multiple pathogenic isolates of Streptococcus agalactiae: implications for the microbial 'pan-genome'.</title>
        <authorList>
            <person name="Tettelin H."/>
            <person name="Masignani V."/>
            <person name="Cieslewicz M.J."/>
            <person name="Donati C."/>
            <person name="Medini D."/>
            <person name="Ward N.L."/>
            <person name="Angiuoli S.V."/>
            <person name="Crabtree J."/>
            <person name="Jones A.L."/>
            <person name="Durkin A.S."/>
            <person name="DeBoy R.T."/>
            <person name="Davidsen T.M."/>
            <person name="Mora M."/>
            <person name="Scarselli M."/>
            <person name="Margarit y Ros I."/>
            <person name="Peterson J.D."/>
            <person name="Hauser C.R."/>
            <person name="Sundaram J.P."/>
            <person name="Nelson W.C."/>
            <person name="Madupu R."/>
            <person name="Brinkac L.M."/>
            <person name="Dodson R.J."/>
            <person name="Rosovitz M.J."/>
            <person name="Sullivan S.A."/>
            <person name="Daugherty S.C."/>
            <person name="Haft D.H."/>
            <person name="Selengut J."/>
            <person name="Gwinn M.L."/>
            <person name="Zhou L."/>
            <person name="Zafar N."/>
            <person name="Khouri H."/>
            <person name="Radune D."/>
            <person name="Dimitrov G."/>
            <person name="Watkins K."/>
            <person name="O'Connor K.J."/>
            <person name="Smith S."/>
            <person name="Utterback T.R."/>
            <person name="White O."/>
            <person name="Rubens C.E."/>
            <person name="Grandi G."/>
            <person name="Madoff L.C."/>
            <person name="Kasper D.L."/>
            <person name="Telford J.L."/>
            <person name="Wessels M.R."/>
            <person name="Rappuoli R."/>
            <person name="Fraser C.M."/>
        </authorList>
    </citation>
    <scope>NUCLEOTIDE SEQUENCE [LARGE SCALE GENOMIC DNA]</scope>
    <source>
        <strain>ATCC 27591 / A909 / CDC SS700</strain>
    </source>
</reference>
<comment type="function">
    <text evidence="1">Endonuclease that specifically degrades the RNA of RNA-DNA hybrids.</text>
</comment>
<comment type="catalytic activity">
    <reaction evidence="1">
        <text>Endonucleolytic cleavage to 5'-phosphomonoester.</text>
        <dbReference type="EC" id="3.1.26.4"/>
    </reaction>
</comment>
<comment type="cofactor">
    <cofactor evidence="1">
        <name>Mn(2+)</name>
        <dbReference type="ChEBI" id="CHEBI:29035"/>
    </cofactor>
    <cofactor evidence="1">
        <name>Mg(2+)</name>
        <dbReference type="ChEBI" id="CHEBI:18420"/>
    </cofactor>
    <text evidence="1">Manganese or magnesium. Binds 1 divalent metal ion per monomer in the absence of substrate. May bind a second metal ion after substrate binding.</text>
</comment>
<comment type="subcellular location">
    <subcellularLocation>
        <location evidence="1">Cytoplasm</location>
    </subcellularLocation>
</comment>
<comment type="similarity">
    <text evidence="1">Belongs to the RNase HII family. RnhC subfamily.</text>
</comment>
<dbReference type="EC" id="3.1.26.4" evidence="1"/>
<dbReference type="EMBL" id="CP000114">
    <property type="protein sequence ID" value="ABA44911.1"/>
    <property type="molecule type" value="Genomic_DNA"/>
</dbReference>
<dbReference type="RefSeq" id="WP_001092527.1">
    <property type="nucleotide sequence ID" value="NC_007432.1"/>
</dbReference>
<dbReference type="SMR" id="Q3JZH3"/>
<dbReference type="GeneID" id="66886562"/>
<dbReference type="KEGG" id="sak:SAK_1730"/>
<dbReference type="HOGENOM" id="CLU_059546_1_0_9"/>
<dbReference type="GO" id="GO:0005737">
    <property type="term" value="C:cytoplasm"/>
    <property type="evidence" value="ECO:0007669"/>
    <property type="project" value="UniProtKB-SubCell"/>
</dbReference>
<dbReference type="GO" id="GO:0032299">
    <property type="term" value="C:ribonuclease H2 complex"/>
    <property type="evidence" value="ECO:0007669"/>
    <property type="project" value="TreeGrafter"/>
</dbReference>
<dbReference type="GO" id="GO:0000287">
    <property type="term" value="F:magnesium ion binding"/>
    <property type="evidence" value="ECO:0007669"/>
    <property type="project" value="UniProtKB-UniRule"/>
</dbReference>
<dbReference type="GO" id="GO:0003723">
    <property type="term" value="F:RNA binding"/>
    <property type="evidence" value="ECO:0007669"/>
    <property type="project" value="InterPro"/>
</dbReference>
<dbReference type="GO" id="GO:0004523">
    <property type="term" value="F:RNA-DNA hybrid ribonuclease activity"/>
    <property type="evidence" value="ECO:0007669"/>
    <property type="project" value="UniProtKB-UniRule"/>
</dbReference>
<dbReference type="GO" id="GO:0043137">
    <property type="term" value="P:DNA replication, removal of RNA primer"/>
    <property type="evidence" value="ECO:0007669"/>
    <property type="project" value="TreeGrafter"/>
</dbReference>
<dbReference type="GO" id="GO:0006298">
    <property type="term" value="P:mismatch repair"/>
    <property type="evidence" value="ECO:0007669"/>
    <property type="project" value="TreeGrafter"/>
</dbReference>
<dbReference type="CDD" id="cd06590">
    <property type="entry name" value="RNase_HII_bacteria_HIII_like"/>
    <property type="match status" value="1"/>
</dbReference>
<dbReference type="CDD" id="cd14796">
    <property type="entry name" value="RNAse_HIII_N"/>
    <property type="match status" value="1"/>
</dbReference>
<dbReference type="FunFam" id="3.30.420.10:FF:000047">
    <property type="entry name" value="Ribonuclease HIII"/>
    <property type="match status" value="1"/>
</dbReference>
<dbReference type="Gene3D" id="3.30.420.10">
    <property type="entry name" value="Ribonuclease H-like superfamily/Ribonuclease H"/>
    <property type="match status" value="1"/>
</dbReference>
<dbReference type="Gene3D" id="3.30.310.10">
    <property type="entry name" value="TATA-Binding Protein"/>
    <property type="match status" value="1"/>
</dbReference>
<dbReference type="HAMAP" id="MF_00053">
    <property type="entry name" value="RNase_HIII"/>
    <property type="match status" value="1"/>
</dbReference>
<dbReference type="InterPro" id="IPR001352">
    <property type="entry name" value="RNase_HII/HIII"/>
</dbReference>
<dbReference type="InterPro" id="IPR024567">
    <property type="entry name" value="RNase_HII/HIII_dom"/>
</dbReference>
<dbReference type="InterPro" id="IPR004641">
    <property type="entry name" value="RNase_HIII"/>
</dbReference>
<dbReference type="InterPro" id="IPR024568">
    <property type="entry name" value="RNase_HIII_N"/>
</dbReference>
<dbReference type="InterPro" id="IPR012337">
    <property type="entry name" value="RNaseH-like_sf"/>
</dbReference>
<dbReference type="InterPro" id="IPR036397">
    <property type="entry name" value="RNaseH_sf"/>
</dbReference>
<dbReference type="InterPro" id="IPR012295">
    <property type="entry name" value="TBP_dom_sf"/>
</dbReference>
<dbReference type="NCBIfam" id="TIGR00716">
    <property type="entry name" value="rnhC"/>
    <property type="match status" value="1"/>
</dbReference>
<dbReference type="PANTHER" id="PTHR10954:SF23">
    <property type="entry name" value="RIBONUCLEASE"/>
    <property type="match status" value="1"/>
</dbReference>
<dbReference type="PANTHER" id="PTHR10954">
    <property type="entry name" value="RIBONUCLEASE H2 SUBUNIT A"/>
    <property type="match status" value="1"/>
</dbReference>
<dbReference type="Pfam" id="PF11858">
    <property type="entry name" value="DUF3378"/>
    <property type="match status" value="1"/>
</dbReference>
<dbReference type="Pfam" id="PF01351">
    <property type="entry name" value="RNase_HII"/>
    <property type="match status" value="1"/>
</dbReference>
<dbReference type="PIRSF" id="PIRSF037748">
    <property type="entry name" value="RnhC"/>
    <property type="match status" value="1"/>
</dbReference>
<dbReference type="SUPFAM" id="SSF53098">
    <property type="entry name" value="Ribonuclease H-like"/>
    <property type="match status" value="1"/>
</dbReference>
<dbReference type="PROSITE" id="PS51975">
    <property type="entry name" value="RNASE_H_2"/>
    <property type="match status" value="1"/>
</dbReference>